<dbReference type="EC" id="2.7.4.9" evidence="1"/>
<dbReference type="EMBL" id="CP000095">
    <property type="protein sequence ID" value="AAZ58984.1"/>
    <property type="molecule type" value="Genomic_DNA"/>
</dbReference>
<dbReference type="RefSeq" id="WP_011294129.1">
    <property type="nucleotide sequence ID" value="NC_007335.2"/>
</dbReference>
<dbReference type="SMR" id="Q46HP4"/>
<dbReference type="STRING" id="59920.PMN2A_1496"/>
<dbReference type="KEGG" id="pmn:PMN2A_1496"/>
<dbReference type="HOGENOM" id="CLU_049131_0_0_3"/>
<dbReference type="OrthoDB" id="9774907at2"/>
<dbReference type="PhylomeDB" id="Q46HP4"/>
<dbReference type="Proteomes" id="UP000002535">
    <property type="component" value="Chromosome"/>
</dbReference>
<dbReference type="GO" id="GO:0005829">
    <property type="term" value="C:cytosol"/>
    <property type="evidence" value="ECO:0007669"/>
    <property type="project" value="TreeGrafter"/>
</dbReference>
<dbReference type="GO" id="GO:0005524">
    <property type="term" value="F:ATP binding"/>
    <property type="evidence" value="ECO:0007669"/>
    <property type="project" value="UniProtKB-UniRule"/>
</dbReference>
<dbReference type="GO" id="GO:0004798">
    <property type="term" value="F:dTMP kinase activity"/>
    <property type="evidence" value="ECO:0007669"/>
    <property type="project" value="UniProtKB-UniRule"/>
</dbReference>
<dbReference type="GO" id="GO:0006233">
    <property type="term" value="P:dTDP biosynthetic process"/>
    <property type="evidence" value="ECO:0007669"/>
    <property type="project" value="InterPro"/>
</dbReference>
<dbReference type="GO" id="GO:0006235">
    <property type="term" value="P:dTTP biosynthetic process"/>
    <property type="evidence" value="ECO:0007669"/>
    <property type="project" value="UniProtKB-UniRule"/>
</dbReference>
<dbReference type="GO" id="GO:0006227">
    <property type="term" value="P:dUDP biosynthetic process"/>
    <property type="evidence" value="ECO:0007669"/>
    <property type="project" value="TreeGrafter"/>
</dbReference>
<dbReference type="CDD" id="cd01672">
    <property type="entry name" value="TMPK"/>
    <property type="match status" value="1"/>
</dbReference>
<dbReference type="FunFam" id="3.40.50.300:FF:000225">
    <property type="entry name" value="Thymidylate kinase"/>
    <property type="match status" value="1"/>
</dbReference>
<dbReference type="Gene3D" id="3.40.50.300">
    <property type="entry name" value="P-loop containing nucleotide triphosphate hydrolases"/>
    <property type="match status" value="1"/>
</dbReference>
<dbReference type="HAMAP" id="MF_00165">
    <property type="entry name" value="Thymidylate_kinase"/>
    <property type="match status" value="1"/>
</dbReference>
<dbReference type="InterPro" id="IPR027417">
    <property type="entry name" value="P-loop_NTPase"/>
</dbReference>
<dbReference type="InterPro" id="IPR039430">
    <property type="entry name" value="Thymidylate_kin-like_dom"/>
</dbReference>
<dbReference type="InterPro" id="IPR018095">
    <property type="entry name" value="Thymidylate_kin_CS"/>
</dbReference>
<dbReference type="InterPro" id="IPR018094">
    <property type="entry name" value="Thymidylate_kinase"/>
</dbReference>
<dbReference type="NCBIfam" id="TIGR00041">
    <property type="entry name" value="DTMP_kinase"/>
    <property type="match status" value="1"/>
</dbReference>
<dbReference type="PANTHER" id="PTHR10344">
    <property type="entry name" value="THYMIDYLATE KINASE"/>
    <property type="match status" value="1"/>
</dbReference>
<dbReference type="PANTHER" id="PTHR10344:SF4">
    <property type="entry name" value="UMP-CMP KINASE 2, MITOCHONDRIAL"/>
    <property type="match status" value="1"/>
</dbReference>
<dbReference type="Pfam" id="PF02223">
    <property type="entry name" value="Thymidylate_kin"/>
    <property type="match status" value="1"/>
</dbReference>
<dbReference type="SUPFAM" id="SSF52540">
    <property type="entry name" value="P-loop containing nucleoside triphosphate hydrolases"/>
    <property type="match status" value="1"/>
</dbReference>
<dbReference type="PROSITE" id="PS01331">
    <property type="entry name" value="THYMIDYLATE_KINASE"/>
    <property type="match status" value="1"/>
</dbReference>
<feature type="chain" id="PRO_1000023251" description="Thymidylate kinase">
    <location>
        <begin position="1"/>
        <end position="211"/>
    </location>
</feature>
<feature type="binding site" evidence="1">
    <location>
        <begin position="10"/>
        <end position="17"/>
    </location>
    <ligand>
        <name>ATP</name>
        <dbReference type="ChEBI" id="CHEBI:30616"/>
    </ligand>
</feature>
<protein>
    <recommendedName>
        <fullName evidence="1">Thymidylate kinase</fullName>
        <ecNumber evidence="1">2.7.4.9</ecNumber>
    </recommendedName>
    <alternativeName>
        <fullName evidence="1">dTMP kinase</fullName>
    </alternativeName>
</protein>
<organism>
    <name type="scientific">Prochlorococcus marinus (strain NATL2A)</name>
    <dbReference type="NCBI Taxonomy" id="59920"/>
    <lineage>
        <taxon>Bacteria</taxon>
        <taxon>Bacillati</taxon>
        <taxon>Cyanobacteriota</taxon>
        <taxon>Cyanophyceae</taxon>
        <taxon>Synechococcales</taxon>
        <taxon>Prochlorococcaceae</taxon>
        <taxon>Prochlorococcus</taxon>
    </lineage>
</organism>
<evidence type="ECO:0000255" key="1">
    <source>
        <dbReference type="HAMAP-Rule" id="MF_00165"/>
    </source>
</evidence>
<proteinExistence type="inferred from homology"/>
<keyword id="KW-0067">ATP-binding</keyword>
<keyword id="KW-0418">Kinase</keyword>
<keyword id="KW-0545">Nucleotide biosynthesis</keyword>
<keyword id="KW-0547">Nucleotide-binding</keyword>
<keyword id="KW-1185">Reference proteome</keyword>
<keyword id="KW-0808">Transferase</keyword>
<gene>
    <name evidence="1" type="primary">tmk</name>
    <name type="ordered locus">PMN2A_1496</name>
</gene>
<comment type="function">
    <text evidence="1">Phosphorylation of dTMP to form dTDP in both de novo and salvage pathways of dTTP synthesis.</text>
</comment>
<comment type="catalytic activity">
    <reaction evidence="1">
        <text>dTMP + ATP = dTDP + ADP</text>
        <dbReference type="Rhea" id="RHEA:13517"/>
        <dbReference type="ChEBI" id="CHEBI:30616"/>
        <dbReference type="ChEBI" id="CHEBI:58369"/>
        <dbReference type="ChEBI" id="CHEBI:63528"/>
        <dbReference type="ChEBI" id="CHEBI:456216"/>
        <dbReference type="EC" id="2.7.4.9"/>
    </reaction>
</comment>
<comment type="similarity">
    <text evidence="1">Belongs to the thymidylate kinase family.</text>
</comment>
<name>KTHY_PROMT</name>
<sequence length="211" mass="23831">MKGKFIVFEGIDGSGKTTQINQLSKWLISSDLIPENNKLVITREPGGTKLGKSIRSLLLDTSIEKSPDSITELLLYAADRSQHINEIIRPTLDQGDWVISDRFCGSTLAYQGYGRKLDINLIKDLEAIATQGIAPDITFLLDIPIEESIRRRRNRKDDRIEKEGREFLSNVSLGFQALSEDSNWKKISAIDSKEKIISEIKSEIKKLIKNK</sequence>
<reference key="1">
    <citation type="journal article" date="2007" name="PLoS Genet.">
        <title>Patterns and implications of gene gain and loss in the evolution of Prochlorococcus.</title>
        <authorList>
            <person name="Kettler G.C."/>
            <person name="Martiny A.C."/>
            <person name="Huang K."/>
            <person name="Zucker J."/>
            <person name="Coleman M.L."/>
            <person name="Rodrigue S."/>
            <person name="Chen F."/>
            <person name="Lapidus A."/>
            <person name="Ferriera S."/>
            <person name="Johnson J."/>
            <person name="Steglich C."/>
            <person name="Church G.M."/>
            <person name="Richardson P."/>
            <person name="Chisholm S.W."/>
        </authorList>
    </citation>
    <scope>NUCLEOTIDE SEQUENCE [LARGE SCALE GENOMIC DNA]</scope>
    <source>
        <strain>NATL2A</strain>
    </source>
</reference>
<accession>Q46HP4</accession>